<sequence length="364" mass="39555">MSTATSAPVVESMSDTVVCPQLSRHSTSLEELYTIGYNRSHSPSCFSSAGCEEEEGQKNVLAERYKTKLCKNFVQYGTCPYDIRCMFAHGEEELRTAEMNIMDGLVTKDAITSFQKLWHRAVSASSGSKHHSSHVANRRGVMTTATTTTTAGGSTDAAMHICRRMQRVVAAAAAAVPCGGRRVVSGSIRIRGCVRHNPYCHNILPTVSRYYSTMPDVFTRPYSKSDSCGNEAITEGNAWTYANEEGNEKETPAMISSGVPELTAWKRFNYVAERSQCTSVPEQNLPCADFAAIKESNNTGGNASGVDVENVDDAEHSTCSSVGNESGYFCRASRSASCGEQSQSHLKREGNEGRGEGLHMFLSL</sequence>
<reference evidence="10" key="1">
    <citation type="journal article" date="2005" name="Science">
        <title>Comparative genomics of trypanosomatid parasitic protozoa.</title>
        <authorList>
            <person name="El-Sayed N.M."/>
            <person name="Myler P.J."/>
            <person name="Blandin G."/>
            <person name="Berriman M."/>
            <person name="Crabtree J."/>
            <person name="Aggarwal G."/>
            <person name="Caler E."/>
            <person name="Renauld H."/>
            <person name="Worthey E.A."/>
            <person name="Hertz-Fowler C."/>
            <person name="Ghedin E."/>
            <person name="Peacock C."/>
            <person name="Bartholomeu D.C."/>
            <person name="Haas B.J."/>
            <person name="Tran A.N."/>
            <person name="Wortman J.R."/>
            <person name="Alsmark U.C."/>
            <person name="Angiuoli S."/>
            <person name="Anupama A."/>
            <person name="Badger J."/>
            <person name="Bringaud F."/>
            <person name="Cadag E."/>
            <person name="Carlton J.M."/>
            <person name="Cerqueira G.C."/>
            <person name="Creasy T."/>
            <person name="Delcher A.L."/>
            <person name="Djikeng A."/>
            <person name="Embley T.M."/>
            <person name="Hauser C."/>
            <person name="Ivens A.C."/>
            <person name="Kummerfeld S.K."/>
            <person name="Pereira-Leal J.B."/>
            <person name="Nilsson D."/>
            <person name="Peterson J."/>
            <person name="Salzberg S.L."/>
            <person name="Shallom J."/>
            <person name="Silva J.C."/>
            <person name="Sundaram J."/>
            <person name="Westenberger S."/>
            <person name="White O."/>
            <person name="Melville S.E."/>
            <person name="Donelson J.E."/>
            <person name="Andersson B."/>
            <person name="Stuart K.D."/>
            <person name="Hall N."/>
        </authorList>
    </citation>
    <scope>NUCLEOTIDE SEQUENCE [LARGE SCALE GENOMIC DNA]</scope>
    <source>
        <strain evidence="10">927/4 GUTat10.1</strain>
    </source>
</reference>
<reference evidence="11" key="2">
    <citation type="journal article" date="2005" name="Science">
        <title>The genome of the African trypanosome Trypanosoma brucei.</title>
        <authorList>
            <person name="Berriman M."/>
            <person name="Ghedin E."/>
            <person name="Hertz-Fowler C."/>
            <person name="Blandin G."/>
            <person name="Renauld H."/>
            <person name="Bartholomeu D.C."/>
            <person name="Lennard N.J."/>
            <person name="Caler E."/>
            <person name="Hamlin N.E."/>
            <person name="Haas B."/>
            <person name="Bohme U."/>
            <person name="Hannick L."/>
            <person name="Aslett M.A."/>
            <person name="Shallom J."/>
            <person name="Marcello L."/>
            <person name="Hou L."/>
            <person name="Wickstead B."/>
            <person name="Alsmark U.C.M."/>
            <person name="Arrowsmith C."/>
            <person name="Atkin R.J."/>
            <person name="Barron A.J."/>
            <person name="Bringaud F."/>
            <person name="Brooks K."/>
            <person name="Carrington M."/>
            <person name="Cherevach I."/>
            <person name="Chillingworth T.J."/>
            <person name="Churcher C."/>
            <person name="Clark L.N."/>
            <person name="Corton C.H."/>
            <person name="Cronin A."/>
            <person name="Davies R.M."/>
            <person name="Doggett J."/>
            <person name="Djikeng A."/>
            <person name="Feldblyum T."/>
            <person name="Field M.C."/>
            <person name="Fraser A."/>
            <person name="Goodhead I."/>
            <person name="Hance Z."/>
            <person name="Harper D."/>
            <person name="Harris B.R."/>
            <person name="Hauser H."/>
            <person name="Hostetler J."/>
            <person name="Ivens A."/>
            <person name="Jagels K."/>
            <person name="Johnson D."/>
            <person name="Johnson J."/>
            <person name="Jones K."/>
            <person name="Kerhornou A.X."/>
            <person name="Koo H."/>
            <person name="Larke N."/>
            <person name="Landfear S."/>
            <person name="Larkin C."/>
            <person name="Leech V."/>
            <person name="Line A."/>
            <person name="Lord A."/>
            <person name="Macleod A."/>
            <person name="Mooney P.J."/>
            <person name="Moule S."/>
            <person name="Martin D.M."/>
            <person name="Morgan G.W."/>
            <person name="Mungall K."/>
            <person name="Norbertczak H."/>
            <person name="Ormond D."/>
            <person name="Pai G."/>
            <person name="Peacock C.S."/>
            <person name="Peterson J."/>
            <person name="Quail M.A."/>
            <person name="Rabbinowitsch E."/>
            <person name="Rajandream M.A."/>
            <person name="Reitter C."/>
            <person name="Salzberg S.L."/>
            <person name="Sanders M."/>
            <person name="Schobel S."/>
            <person name="Sharp S."/>
            <person name="Simmonds M."/>
            <person name="Simpson A.J."/>
            <person name="Tallon L."/>
            <person name="Turner C.M."/>
            <person name="Tait A."/>
            <person name="Tivey A.R."/>
            <person name="Van Aken S."/>
            <person name="Walker D."/>
            <person name="Wanless D."/>
            <person name="Wang S."/>
            <person name="White B."/>
            <person name="White O."/>
            <person name="Whitehead S."/>
            <person name="Woodward J."/>
            <person name="Wortman J."/>
            <person name="Adams M.D."/>
            <person name="Embley T.M."/>
            <person name="Gull K."/>
            <person name="Ullu E."/>
            <person name="Barry J.D."/>
            <person name="Fairlamb A.H."/>
            <person name="Opperdoes F."/>
            <person name="Barrell B.G."/>
            <person name="Donelson J.E."/>
            <person name="Hall N."/>
            <person name="Fraser C.M."/>
            <person name="Melville S.E."/>
            <person name="El-Sayed N.M.A."/>
        </authorList>
    </citation>
    <scope>NUCLEOTIDE SEQUENCE [LARGE SCALE GENOMIC DNA]</scope>
    <source>
        <strain evidence="11">927/4 GUTat10.1</strain>
    </source>
</reference>
<reference evidence="8" key="3">
    <citation type="journal article" date="2013" name="PLoS Pathog.">
        <title>Post-transcriptional regulation of the trypanosome heat shock response by a zinc finger protein.</title>
        <authorList>
            <person name="Droll D."/>
            <person name="Minia I."/>
            <person name="Fadda A."/>
            <person name="Singh A."/>
            <person name="Stewart M."/>
            <person name="Queiroz R."/>
            <person name="Clayton C."/>
        </authorList>
    </citation>
    <scope>FUNCTION</scope>
    <scope>INTERACTION WITH MKT1 AND PBP1</scope>
    <scope>SUBCELLULAR LOCATION</scope>
    <scope>DEVELOPMENTAL STAGE</scope>
    <scope>INDUCTION</scope>
    <scope>DOMAIN</scope>
    <scope>PHOSPHORYLATION</scope>
    <scope>DISRUPTION PHENOTYPE</scope>
    <source>
        <strain evidence="6">427</strain>
    </source>
</reference>
<reference evidence="8" key="4">
    <citation type="journal article" date="2014" name="Nucleic Acids Res.">
        <title>Trypanosome MKT1 and the RNA-binding protein ZC3H11: interactions and potential roles in post-transcriptional regulatory networks.</title>
        <authorList>
            <person name="Singh A."/>
            <person name="Minia I."/>
            <person name="Droll D."/>
            <person name="Fadda A."/>
            <person name="Clayton C."/>
            <person name="Erben E."/>
        </authorList>
    </citation>
    <scope>IDENTIFICATION BY MASS SPECTROMETRY</scope>
    <scope>FUNCTION</scope>
    <scope>INTERACTION WITH MKT1 AND PBP1</scope>
    <scope>MOTIF</scope>
    <scope>MUTAGENESIS OF 198-PRO-TYR-199</scope>
    <source>
        <strain evidence="7">427</strain>
    </source>
</reference>
<reference evidence="8" key="5">
    <citation type="journal article" date="2016" name="PLoS Pathog.">
        <title>Regulating a Post-Transcriptional Regulator: Protein Phosphorylation, Degradation and Translational Blockage in Control of the Trypanosome Stress-Response RNA-Binding Protein ZC3H11.</title>
        <authorList>
            <person name="Minia I."/>
            <person name="Clayton C."/>
        </authorList>
    </citation>
    <scope>FUNCTION</scope>
    <scope>INDUCTION</scope>
    <scope>PHOSPHORYLATION</scope>
    <scope>DISRUPTION PHENOTYPE</scope>
</reference>
<proteinExistence type="evidence at protein level"/>
<keyword id="KW-0963">Cytoplasm</keyword>
<keyword id="KW-0479">Metal-binding</keyword>
<keyword id="KW-0597">Phosphoprotein</keyword>
<keyword id="KW-1185">Reference proteome</keyword>
<keyword id="KW-0694">RNA-binding</keyword>
<keyword id="KW-0346">Stress response</keyword>
<keyword id="KW-0810">Translation regulation</keyword>
<keyword id="KW-0862">Zinc</keyword>
<keyword id="KW-0863">Zinc-finger</keyword>
<accession>Q57W26</accession>
<accession>D6XG19</accession>
<protein>
    <recommendedName>
        <fullName evidence="8">RNA-binding protein ZC3H11</fullName>
    </recommendedName>
    <alternativeName>
        <fullName evidence="6">CCCH zinc finger protein ZC3H11</fullName>
    </alternativeName>
</protein>
<name>ZC311_TRYB2</name>
<organism evidence="11">
    <name type="scientific">Trypanosoma brucei brucei (strain 927/4 GUTat10.1)</name>
    <dbReference type="NCBI Taxonomy" id="185431"/>
    <lineage>
        <taxon>Eukaryota</taxon>
        <taxon>Discoba</taxon>
        <taxon>Euglenozoa</taxon>
        <taxon>Kinetoplastea</taxon>
        <taxon>Metakinetoplastina</taxon>
        <taxon>Trypanosomatida</taxon>
        <taxon>Trypanosomatidae</taxon>
        <taxon>Trypanosoma</taxon>
    </lineage>
</organism>
<dbReference type="EMBL" id="AC159432">
    <property type="protein sequence ID" value="AAX70193.1"/>
    <property type="molecule type" value="Genomic_DNA"/>
</dbReference>
<dbReference type="EMBL" id="CP000068">
    <property type="protein sequence ID" value="AAZ11196.1"/>
    <property type="molecule type" value="Genomic_DNA"/>
</dbReference>
<dbReference type="RefSeq" id="XP_844755.1">
    <property type="nucleotide sequence ID" value="XM_839662.1"/>
</dbReference>
<dbReference type="STRING" id="185431.Q57W26"/>
<dbReference type="PaxDb" id="5691-AAZ11196"/>
<dbReference type="GeneID" id="3657190"/>
<dbReference type="KEGG" id="tbr:Tb927.5.810"/>
<dbReference type="VEuPathDB" id="TriTrypDB:Tb927.5.810"/>
<dbReference type="eggNOG" id="ENOG502S8CS">
    <property type="taxonomic scope" value="Eukaryota"/>
</dbReference>
<dbReference type="InParanoid" id="Q57W26"/>
<dbReference type="OrthoDB" id="410307at2759"/>
<dbReference type="Proteomes" id="UP000008524">
    <property type="component" value="Chromosome 5"/>
</dbReference>
<dbReference type="GO" id="GO:0005737">
    <property type="term" value="C:cytoplasm"/>
    <property type="evidence" value="ECO:0000314"/>
    <property type="project" value="GeneDB"/>
</dbReference>
<dbReference type="GO" id="GO:0035925">
    <property type="term" value="F:mRNA 3'-UTR AU-rich region binding"/>
    <property type="evidence" value="ECO:0000314"/>
    <property type="project" value="UniProtKB"/>
</dbReference>
<dbReference type="GO" id="GO:0003729">
    <property type="term" value="F:mRNA binding"/>
    <property type="evidence" value="ECO:0000314"/>
    <property type="project" value="GeneDB"/>
</dbReference>
<dbReference type="GO" id="GO:0140517">
    <property type="term" value="F:protein-RNA adaptor activity"/>
    <property type="evidence" value="ECO:0000314"/>
    <property type="project" value="UniProtKB"/>
</dbReference>
<dbReference type="GO" id="GO:0003723">
    <property type="term" value="F:RNA binding"/>
    <property type="evidence" value="ECO:0000255"/>
    <property type="project" value="GeneDB"/>
</dbReference>
<dbReference type="GO" id="GO:0008270">
    <property type="term" value="F:zinc ion binding"/>
    <property type="evidence" value="ECO:0007669"/>
    <property type="project" value="UniProtKB-KW"/>
</dbReference>
<dbReference type="GO" id="GO:0070935">
    <property type="term" value="P:3'-UTR-mediated mRNA stabilization"/>
    <property type="evidence" value="ECO:0000315"/>
    <property type="project" value="UniProtKB"/>
</dbReference>
<dbReference type="GO" id="GO:0034605">
    <property type="term" value="P:cellular response to heat"/>
    <property type="evidence" value="ECO:0000270"/>
    <property type="project" value="GeneDB"/>
</dbReference>
<dbReference type="GO" id="GO:0048255">
    <property type="term" value="P:mRNA stabilization"/>
    <property type="evidence" value="ECO:0000314"/>
    <property type="project" value="UniProtKB"/>
</dbReference>
<dbReference type="GO" id="GO:0010608">
    <property type="term" value="P:post-transcriptional regulation of gene expression"/>
    <property type="evidence" value="ECO:0000314"/>
    <property type="project" value="GeneDB"/>
</dbReference>
<dbReference type="GO" id="GO:0006417">
    <property type="term" value="P:regulation of translation"/>
    <property type="evidence" value="ECO:0007669"/>
    <property type="project" value="UniProtKB-KW"/>
</dbReference>
<dbReference type="GO" id="GO:0009408">
    <property type="term" value="P:response to heat"/>
    <property type="evidence" value="ECO:0000315"/>
    <property type="project" value="GeneDB"/>
</dbReference>
<dbReference type="FunFam" id="4.10.1000.10:FF:000003">
    <property type="entry name" value="Zinc finger CCCH domain-containing protein"/>
    <property type="match status" value="1"/>
</dbReference>
<dbReference type="Gene3D" id="4.10.1000.10">
    <property type="entry name" value="Zinc finger, CCCH-type"/>
    <property type="match status" value="1"/>
</dbReference>
<dbReference type="InterPro" id="IPR000571">
    <property type="entry name" value="Znf_CCCH"/>
</dbReference>
<dbReference type="InterPro" id="IPR036855">
    <property type="entry name" value="Znf_CCCH_sf"/>
</dbReference>
<dbReference type="Pfam" id="PF00642">
    <property type="entry name" value="zf-CCCH"/>
    <property type="match status" value="1"/>
</dbReference>
<dbReference type="SMART" id="SM00356">
    <property type="entry name" value="ZnF_C3H1"/>
    <property type="match status" value="1"/>
</dbReference>
<dbReference type="SUPFAM" id="SSF90229">
    <property type="entry name" value="CCCH zinc finger"/>
    <property type="match status" value="1"/>
</dbReference>
<dbReference type="PROSITE" id="PS50103">
    <property type="entry name" value="ZF_C3H1"/>
    <property type="match status" value="1"/>
</dbReference>
<comment type="function">
    <text evidence="3 4 5">RNA-binding protein involved in regulation of mRNA stability (PubMed:23592996). Binds AU-rich regions in the 3'-UTR of mRNAs and promotes their stabilization by recruiting a MKT1-containing complex (PubMed:23592996, PubMed:24470144). Stabilizes chaperone mRNAs during stress that causes an accumulation of misfolded or unfolded proteins in the cytoplasm (PubMed:23592996, PubMed:24470144, PubMed:27002830).</text>
</comment>
<comment type="subunit">
    <text evidence="3 4">Interacts (via MKT1-binding motif) with MKT1 (PubMed:23592996, PubMed:24470144). Interacts with PBP1 (via C-terminus); the interaction is direct (PubMed:23592996, PubMed:24470144).</text>
</comment>
<comment type="subcellular location">
    <subcellularLocation>
        <location evidence="3">Cytoplasm</location>
    </subcellularLocation>
</comment>
<comment type="developmental stage">
    <text evidence="3">Expressed in the procyclic form and the bloodstream form at low levels.</text>
</comment>
<comment type="induction">
    <text evidence="3 5">Induced during the response to misfolded or unfolded cytoplasmic proteins; including during thermal stress, sodium arsenite, or acidic pH (at protein level) (PubMed:23592996, PubMed:27002830). Not induced by endoplasmic reticulum stress (PubMed:27002830).</text>
</comment>
<comment type="domain">
    <text evidence="3">The zinc finger domain binds AU-rich regions in the 3'-UTR of mRNAs.</text>
</comment>
<comment type="PTM">
    <text evidence="3 5">Phosphorylated at the N-terminus (PubMed:23592996, PubMed:27002830). CK1.2-dependent phosphorylation may lead to proteasome-dependent degradation of ZC3H11 in absence of stress (PubMed:27002830).</text>
</comment>
<comment type="disruption phenotype">
    <text evidence="3 5">RNAi-mediated knockdown in the bloodstream form is lethal and causes a reduction in chaperone mRNA levels in response to heat-induced stress (PubMed:23592996). RNAi-mediated knockdown in the procyclic form causes sensitivity to cytoplasmic protein folding stress (induced by high temperature, puromycin, arsenite, MG132 or ethanol), characterized by a reduction in chaperone mRNA levels (PubMed:23592996, PubMed:27002830).</text>
</comment>
<evidence type="ECO:0000255" key="1">
    <source>
        <dbReference type="PROSITE-ProRule" id="PRU00723"/>
    </source>
</evidence>
<evidence type="ECO:0000256" key="2">
    <source>
        <dbReference type="SAM" id="MobiDB-lite"/>
    </source>
</evidence>
<evidence type="ECO:0000269" key="3">
    <source>
    </source>
</evidence>
<evidence type="ECO:0000269" key="4">
    <source>
    </source>
</evidence>
<evidence type="ECO:0000269" key="5">
    <source>
    </source>
</evidence>
<evidence type="ECO:0000303" key="6">
    <source>
    </source>
</evidence>
<evidence type="ECO:0000303" key="7">
    <source>
    </source>
</evidence>
<evidence type="ECO:0000305" key="8"/>
<evidence type="ECO:0000312" key="9">
    <source>
        <dbReference type="EMBL" id="AAX70193.1"/>
    </source>
</evidence>
<evidence type="ECO:0000312" key="10">
    <source>
        <dbReference type="EMBL" id="AAZ11196.1"/>
    </source>
</evidence>
<evidence type="ECO:0000312" key="11">
    <source>
        <dbReference type="Proteomes" id="UP000008524"/>
    </source>
</evidence>
<gene>
    <name evidence="6" type="primary">ZC3H11</name>
    <name evidence="9" type="ORF">Tb927.5.810</name>
</gene>
<feature type="chain" id="PRO_0000451929" description="RNA-binding protein ZC3H11">
    <location>
        <begin position="1"/>
        <end position="364"/>
    </location>
</feature>
<feature type="zinc finger region" description="C3H1-type" evidence="1">
    <location>
        <begin position="64"/>
        <end position="92"/>
    </location>
</feature>
<feature type="region of interest" description="Disordered" evidence="2">
    <location>
        <begin position="340"/>
        <end position="364"/>
    </location>
</feature>
<feature type="short sequence motif" description="MKT1-binding motif" evidence="4">
    <location>
        <begin position="194"/>
        <end position="199"/>
    </location>
</feature>
<feature type="compositionally biased region" description="Basic and acidic residues" evidence="2">
    <location>
        <begin position="346"/>
        <end position="357"/>
    </location>
</feature>
<feature type="mutagenesis site" description="Abolishes MKT1 protein binding." evidence="4">
    <original>PY</original>
    <variation>AA</variation>
    <location>
        <begin position="198"/>
        <end position="199"/>
    </location>
</feature>